<organism>
    <name type="scientific">Macrocystis pyrifera</name>
    <name type="common">Giant kelp</name>
    <name type="synonym">Fucus pyrifer</name>
    <dbReference type="NCBI Taxonomy" id="35122"/>
    <lineage>
        <taxon>Eukaryota</taxon>
        <taxon>Sar</taxon>
        <taxon>Stramenopiles</taxon>
        <taxon>Ochrophyta</taxon>
        <taxon>PX clade</taxon>
        <taxon>Phaeophyceae</taxon>
        <taxon>Laminariales</taxon>
        <taxon>Laminariaceae</taxon>
        <taxon>Macrocystis</taxon>
    </lineage>
</organism>
<accession>Q40297</accession>
<comment type="function">
    <text>The light-harvesting complex (LHC) functions as a light receptor, it captures and delivers excitation energy to photosystems with which it is closely associated. Energy is transferred from the carotenoid and chlorophyll C (or B) to chlorophyll A and the photosynthetic reaction centers where it is used to synthesize ATP and reducing power.</text>
</comment>
<comment type="subunit">
    <text>The LHC complex of chromophytic algae is composed of fucoxanthin, chlorophyll A and C bound non-covalently by fucoxanthin chlorophyll proteins (FCPs). The ratio of pigments in this LHC is; fucoxanthin: chlorophyll C: chlorophyll A; (0.6-1): (0.1-0.3): (1).</text>
</comment>
<comment type="subcellular location">
    <subcellularLocation>
        <location>Plastid</location>
        <location>Chloroplast thylakoid membrane</location>
        <topology>Multi-pass membrane protein</topology>
    </subcellularLocation>
    <text>FCPs are probably transported across the endoplasmic reticulum membranes that surround the plastid via a signal peptide, followed by translocation across the thylakoid membrane via a transit peptide.</text>
</comment>
<comment type="induction">
    <text>Levels are increased twofold when transferred from high to low blue or white light.</text>
</comment>
<comment type="similarity">
    <text evidence="2">Belongs to the fucoxanthin chlorophyll protein family.</text>
</comment>
<keyword id="KW-0148">Chlorophyll</keyword>
<keyword id="KW-0150">Chloroplast</keyword>
<keyword id="KW-0157">Chromophore</keyword>
<keyword id="KW-0437">Light-harvesting polypeptide</keyword>
<keyword id="KW-0472">Membrane</keyword>
<keyword id="KW-0602">Photosynthesis</keyword>
<keyword id="KW-0604">Photosystem II</keyword>
<keyword id="KW-0934">Plastid</keyword>
<keyword id="KW-0793">Thylakoid</keyword>
<keyword id="KW-0809">Transit peptide</keyword>
<keyword id="KW-0812">Transmembrane</keyword>
<keyword id="KW-1133">Transmembrane helix</keyword>
<sequence length="217" mass="22883">MKSAVMAVACAAAPGLRRPSAFNGAALTTSAKSSSAMKMSFESEIGAQAPLGFWDPLGLLADADQDGFERLRYVEVKHGRIAMLAIAGHLTQQNARLPGMLSNSANLSFADMPNGVAALSKIPPAGLAQIFAFIGFLELAVMKNVEGSFPGDFTLGGNPFGASWDAMSEETQASKRAIELNNGRAAQMGILALMVHEELNNKPYVINDLVGASYTFN</sequence>
<gene>
    <name type="primary">FCPA</name>
</gene>
<evidence type="ECO:0000255" key="1"/>
<evidence type="ECO:0000305" key="2"/>
<dbReference type="EMBL" id="U10065">
    <property type="protein sequence ID" value="AAC49018.1"/>
    <property type="molecule type" value="mRNA"/>
</dbReference>
<dbReference type="PIR" id="S53820">
    <property type="entry name" value="S53820"/>
</dbReference>
<dbReference type="SMR" id="Q40297"/>
<dbReference type="GO" id="GO:0009535">
    <property type="term" value="C:chloroplast thylakoid membrane"/>
    <property type="evidence" value="ECO:0007669"/>
    <property type="project" value="UniProtKB-SubCell"/>
</dbReference>
<dbReference type="GO" id="GO:0030076">
    <property type="term" value="C:light-harvesting complex"/>
    <property type="evidence" value="ECO:0007669"/>
    <property type="project" value="UniProtKB-KW"/>
</dbReference>
<dbReference type="GO" id="GO:0009523">
    <property type="term" value="C:photosystem II"/>
    <property type="evidence" value="ECO:0007669"/>
    <property type="project" value="UniProtKB-KW"/>
</dbReference>
<dbReference type="GO" id="GO:0016168">
    <property type="term" value="F:chlorophyll binding"/>
    <property type="evidence" value="ECO:0007669"/>
    <property type="project" value="UniProtKB-KW"/>
</dbReference>
<dbReference type="GO" id="GO:0009765">
    <property type="term" value="P:photosynthesis, light harvesting"/>
    <property type="evidence" value="ECO:0007669"/>
    <property type="project" value="InterPro"/>
</dbReference>
<dbReference type="Gene3D" id="1.10.3460.10">
    <property type="entry name" value="Chlorophyll a/b binding protein domain"/>
    <property type="match status" value="1"/>
</dbReference>
<dbReference type="InterPro" id="IPR001344">
    <property type="entry name" value="Chloro_AB-bd_pln"/>
</dbReference>
<dbReference type="InterPro" id="IPR022796">
    <property type="entry name" value="Chloroa_b-bind"/>
</dbReference>
<dbReference type="PANTHER" id="PTHR21649">
    <property type="entry name" value="CHLOROPHYLL A/B BINDING PROTEIN"/>
    <property type="match status" value="1"/>
</dbReference>
<dbReference type="Pfam" id="PF00504">
    <property type="entry name" value="Chloroa_b-bind"/>
    <property type="match status" value="1"/>
</dbReference>
<dbReference type="SUPFAM" id="SSF103511">
    <property type="entry name" value="Chlorophyll a-b binding protein"/>
    <property type="match status" value="1"/>
</dbReference>
<proteinExistence type="evidence at transcript level"/>
<protein>
    <recommendedName>
        <fullName>Fucoxanthin-chlorophyll a-c binding protein A, chloroplastic</fullName>
    </recommendedName>
</protein>
<feature type="transit peptide" description="Chloroplast" evidence="2">
    <location>
        <begin position="1"/>
        <end position="39"/>
    </location>
</feature>
<feature type="chain" id="PRO_0000021233" description="Fucoxanthin-chlorophyll a-c binding protein A, chloroplastic">
    <location>
        <begin position="40"/>
        <end position="217"/>
    </location>
</feature>
<feature type="transmembrane region" description="Helical" evidence="1">
    <location>
        <begin position="81"/>
        <end position="101"/>
    </location>
</feature>
<feature type="transmembrane region" description="Helical" evidence="1">
    <location>
        <begin position="122"/>
        <end position="142"/>
    </location>
</feature>
<feature type="transmembrane region" description="Helical" evidence="1">
    <location>
        <begin position="183"/>
        <end position="203"/>
    </location>
</feature>
<name>FCPA_MACPY</name>
<reference key="1">
    <citation type="journal article" date="1995" name="Mol. Gen. Genet.">
        <title>The gene family encoding the fucoxanthin chlorophyll proteins from the brown alga Macrocystis pyrifera.</title>
        <authorList>
            <person name="Apt K.E."/>
            <person name="Clendennen S.K."/>
            <person name="Powers D.A."/>
            <person name="Grossman A.R."/>
        </authorList>
    </citation>
    <scope>NUCLEOTIDE SEQUENCE [MRNA]</scope>
    <source>
        <strain>MAL-1</strain>
    </source>
</reference>